<comment type="function">
    <text evidence="1">Displays ATPase and GTPase activities.</text>
</comment>
<comment type="similarity">
    <text evidence="1">Belongs to the RapZ-like family.</text>
</comment>
<accession>B0U6M8</accession>
<sequence>MKPPEHSLIIISGLSGSGKSIALKTFEDLDYYCSDNLPVELLPHFLRRRLRVAELSDQRIAIGIDIRSGSNLSELDQWRHTAKHYNIKAHLLFFDASNETLLKRYADTRRRHPLSHLGLSLPEAIALERELTAPLREAAEAVIDTSTFNVHQLRRHVVTEFALTHSDKLSLLFESFAYKRGIPTEADFVFDARILPNPHWKPELRSLTGRDSNVRDYMEQQPDVILYLTQITEFLDTWLARLQADTRSYVTVAFGCTGGKHRSVYLAEQMARHAREKGWSEVATFHRELE</sequence>
<dbReference type="EMBL" id="CP000941">
    <property type="protein sequence ID" value="ACA11744.1"/>
    <property type="molecule type" value="Genomic_DNA"/>
</dbReference>
<dbReference type="RefSeq" id="WP_004083780.1">
    <property type="nucleotide sequence ID" value="NC_010513.1"/>
</dbReference>
<dbReference type="SMR" id="B0U6M8"/>
<dbReference type="KEGG" id="xfm:Xfasm12_0753"/>
<dbReference type="HOGENOM" id="CLU_059558_1_1_6"/>
<dbReference type="GO" id="GO:0005524">
    <property type="term" value="F:ATP binding"/>
    <property type="evidence" value="ECO:0007669"/>
    <property type="project" value="UniProtKB-UniRule"/>
</dbReference>
<dbReference type="GO" id="GO:0005525">
    <property type="term" value="F:GTP binding"/>
    <property type="evidence" value="ECO:0007669"/>
    <property type="project" value="UniProtKB-UniRule"/>
</dbReference>
<dbReference type="Gene3D" id="3.40.50.300">
    <property type="entry name" value="P-loop containing nucleotide triphosphate hydrolases"/>
    <property type="match status" value="1"/>
</dbReference>
<dbReference type="HAMAP" id="MF_00636">
    <property type="entry name" value="RapZ_like"/>
    <property type="match status" value="1"/>
</dbReference>
<dbReference type="InterPro" id="IPR027417">
    <property type="entry name" value="P-loop_NTPase"/>
</dbReference>
<dbReference type="InterPro" id="IPR005337">
    <property type="entry name" value="RapZ-like"/>
</dbReference>
<dbReference type="InterPro" id="IPR053930">
    <property type="entry name" value="RapZ-like_N"/>
</dbReference>
<dbReference type="InterPro" id="IPR053931">
    <property type="entry name" value="RapZ_C"/>
</dbReference>
<dbReference type="NCBIfam" id="NF003828">
    <property type="entry name" value="PRK05416.1"/>
    <property type="match status" value="1"/>
</dbReference>
<dbReference type="PANTHER" id="PTHR30448">
    <property type="entry name" value="RNASE ADAPTER PROTEIN RAPZ"/>
    <property type="match status" value="1"/>
</dbReference>
<dbReference type="PANTHER" id="PTHR30448:SF0">
    <property type="entry name" value="RNASE ADAPTER PROTEIN RAPZ"/>
    <property type="match status" value="1"/>
</dbReference>
<dbReference type="Pfam" id="PF22740">
    <property type="entry name" value="PapZ_C"/>
    <property type="match status" value="1"/>
</dbReference>
<dbReference type="Pfam" id="PF03668">
    <property type="entry name" value="RapZ-like_N"/>
    <property type="match status" value="1"/>
</dbReference>
<dbReference type="PIRSF" id="PIRSF005052">
    <property type="entry name" value="P-loopkin"/>
    <property type="match status" value="1"/>
</dbReference>
<dbReference type="SUPFAM" id="SSF52540">
    <property type="entry name" value="P-loop containing nucleoside triphosphate hydrolases"/>
    <property type="match status" value="1"/>
</dbReference>
<gene>
    <name type="ordered locus">Xfasm12_0753</name>
</gene>
<organism>
    <name type="scientific">Xylella fastidiosa (strain M12)</name>
    <dbReference type="NCBI Taxonomy" id="405440"/>
    <lineage>
        <taxon>Bacteria</taxon>
        <taxon>Pseudomonadati</taxon>
        <taxon>Pseudomonadota</taxon>
        <taxon>Gammaproteobacteria</taxon>
        <taxon>Lysobacterales</taxon>
        <taxon>Lysobacteraceae</taxon>
        <taxon>Xylella</taxon>
    </lineage>
</organism>
<name>Y753_XYLFM</name>
<proteinExistence type="inferred from homology"/>
<feature type="chain" id="PRO_1000130797" description="Nucleotide-binding protein Xfasm12_0753">
    <location>
        <begin position="1"/>
        <end position="290"/>
    </location>
</feature>
<feature type="binding site" evidence="1">
    <location>
        <begin position="13"/>
        <end position="20"/>
    </location>
    <ligand>
        <name>ATP</name>
        <dbReference type="ChEBI" id="CHEBI:30616"/>
    </ligand>
</feature>
<feature type="binding site" evidence="1">
    <location>
        <begin position="65"/>
        <end position="68"/>
    </location>
    <ligand>
        <name>GTP</name>
        <dbReference type="ChEBI" id="CHEBI:37565"/>
    </ligand>
</feature>
<evidence type="ECO:0000255" key="1">
    <source>
        <dbReference type="HAMAP-Rule" id="MF_00636"/>
    </source>
</evidence>
<reference key="1">
    <citation type="journal article" date="2010" name="J. Bacteriol.">
        <title>Whole genome sequences of two Xylella fastidiosa strains (M12 and M23) causing almond leaf scorch disease in California.</title>
        <authorList>
            <person name="Chen J."/>
            <person name="Xie G."/>
            <person name="Han S."/>
            <person name="Chertkov O."/>
            <person name="Sims D."/>
            <person name="Civerolo E.L."/>
        </authorList>
    </citation>
    <scope>NUCLEOTIDE SEQUENCE [LARGE SCALE GENOMIC DNA]</scope>
    <source>
        <strain>M12</strain>
    </source>
</reference>
<protein>
    <recommendedName>
        <fullName evidence="1">Nucleotide-binding protein Xfasm12_0753</fullName>
    </recommendedName>
</protein>
<keyword id="KW-0067">ATP-binding</keyword>
<keyword id="KW-0342">GTP-binding</keyword>
<keyword id="KW-0547">Nucleotide-binding</keyword>